<organism>
    <name type="scientific">Streptomyces achromogenes subsp. streptozoticus</name>
    <dbReference type="NCBI Taxonomy" id="285532"/>
    <lineage>
        <taxon>Bacteria</taxon>
        <taxon>Bacillati</taxon>
        <taxon>Actinomycetota</taxon>
        <taxon>Actinomycetes</taxon>
        <taxon>Kitasatosporales</taxon>
        <taxon>Streptomycetaceae</taxon>
        <taxon>Streptomyces</taxon>
    </lineage>
</organism>
<comment type="function">
    <text evidence="3 4">Involved in the biosynthesis of the glucosamine-nitrosourea antibiotic streptozotocin (SZN) (PubMed:30728519, PubMed:30763082). Catalyzes the conversion of L-arginine to N(omega)-methyl-L-arginine (L-NMA), using S-adenosyl-L-methionine (SAM) as a methyl donor (PubMed:30728519, PubMed:30763082).</text>
</comment>
<comment type="catalytic activity">
    <reaction evidence="3 4">
        <text>L-arginine + S-adenosyl-L-methionine = N(omega)-methyl-L-arginine + S-adenosyl-L-homocysteine + H(+)</text>
        <dbReference type="Rhea" id="RHEA:59756"/>
        <dbReference type="ChEBI" id="CHEBI:15378"/>
        <dbReference type="ChEBI" id="CHEBI:32682"/>
        <dbReference type="ChEBI" id="CHEBI:57856"/>
        <dbReference type="ChEBI" id="CHEBI:59789"/>
        <dbReference type="ChEBI" id="CHEBI:114953"/>
        <dbReference type="EC" id="2.1.1.381"/>
    </reaction>
    <physiologicalReaction direction="left-to-right" evidence="3 4">
        <dbReference type="Rhea" id="RHEA:59757"/>
    </physiologicalReaction>
</comment>
<comment type="biophysicochemical properties">
    <kinetics>
        <KM evidence="4">0.49 mM for L-arginine</KM>
        <text evidence="4">kcat is 5.9 min(-1) with L-arginine as substrate.</text>
    </kinetics>
</comment>
<comment type="pathway">
    <text evidence="3 4">Antibiotic biosynthesis.</text>
</comment>
<comment type="disruption phenotype">
    <text evidence="3 4">Deletion of the gene abolishes SZN production.</text>
</comment>
<comment type="similarity">
    <text evidence="1">Belongs to the class I-like SAM-binding methyltransferase superfamily. Protein arginine N-methyltransferase family.</text>
</comment>
<comment type="sequence caution" evidence="7">
    <conflict type="erroneous initiation">
        <sequence resource="EMBL-CDS" id="QBF29329"/>
    </conflict>
    <text>Truncated N-terminus.</text>
</comment>
<keyword id="KW-0045">Antibiotic biosynthesis</keyword>
<keyword id="KW-0489">Methyltransferase</keyword>
<keyword id="KW-0949">S-adenosyl-L-methionine</keyword>
<keyword id="KW-0808">Transferase</keyword>
<reference key="1">
    <citation type="journal article" date="2019" name="Nature">
        <title>An N-nitrosating metalloenzyme constructs the pharmacophore of streptozotocin.</title>
        <authorList>
            <person name="Ng T.L."/>
            <person name="Rohac R."/>
            <person name="Mitchell A.J."/>
            <person name="Boal A.K."/>
            <person name="Balskus E.P."/>
        </authorList>
    </citation>
    <scope>NUCLEOTIDE SEQUENCE [GENOMIC DNA]</scope>
    <scope>FUNCTION</scope>
    <scope>CATALYTIC ACTIVITY</scope>
    <scope>PATHWAY</scope>
    <scope>DISRUPTION PHENOTYPE</scope>
    <source>
        <strain>NRRL 2697</strain>
    </source>
</reference>
<reference key="2">
    <citation type="journal article" date="2019" name="J. Am. Chem. Soc.">
        <title>Two-enzyme pathway links L-arginine to nitric oxide in N-nitroso biosynthesis.</title>
        <authorList>
            <person name="He H.Y."/>
            <person name="Henderson A.C."/>
            <person name="Du Y.L."/>
            <person name="Ryan K.S."/>
        </authorList>
    </citation>
    <scope>NUCLEOTIDE SEQUENCE [GENOMIC DNA]</scope>
    <scope>FUNCTION</scope>
    <scope>CATALYTIC ACTIVITY</scope>
    <scope>BIOPHYSICOCHEMICAL PROPERTIES</scope>
    <scope>PATHWAY</scope>
    <scope>DISRUPTION PHENOTYPE</scope>
    <source>
        <strain>NRRL 3125</strain>
    </source>
</reference>
<feature type="chain" id="PRO_0000457551" description="Arginine N(omega)-methyltransferase">
    <location>
        <begin position="1"/>
        <end position="361"/>
    </location>
</feature>
<feature type="domain" description="SAM-dependent MTase PRMT-type" evidence="1">
    <location>
        <begin position="65"/>
        <end position="361"/>
    </location>
</feature>
<feature type="region of interest" description="Disordered" evidence="2">
    <location>
        <begin position="1"/>
        <end position="24"/>
    </location>
</feature>
<feature type="compositionally biased region" description="Basic and acidic residues" evidence="2">
    <location>
        <begin position="1"/>
        <end position="17"/>
    </location>
</feature>
<sequence length="361" mass="38510">MRHVQEARAVPAEHEARPAPVTMPANGSPYRLGAALLQSLAQEMNALAEQASALLSMPPESLSLDADAFAQIARRNVPRWHFAMLNDTERNTALMTALERGIPAGATVLDIGSGSGLLAMAAARAGAGRVFTCEMNPLLAEIARNVISAHGMSDVITVIGKPSTALDPVRDLGGPVDVLVSEIVDCGLIGEGLLPSVRHAREHLLKPDGIMLPSAARLHGRLVSSDEVLKLNQVTTAGGFDVSLMNTVATRGHFPVRLDTWPHRFLSEAAPLVEFDLARSALEPGERPLALTATADGEVQALAVWFELDMGSGITLSNPPDNPRSHWMQGWVPLDKPVPVKAGETLALRLGWSDFTLRVSI</sequence>
<gene>
    <name evidence="5" type="primary">sznE</name>
    <name evidence="6" type="synonym">stzE</name>
</gene>
<proteinExistence type="evidence at protein level"/>
<name>SZNE_STRC2</name>
<evidence type="ECO:0000255" key="1">
    <source>
        <dbReference type="PROSITE-ProRule" id="PRU01015"/>
    </source>
</evidence>
<evidence type="ECO:0000256" key="2">
    <source>
        <dbReference type="SAM" id="MobiDB-lite"/>
    </source>
</evidence>
<evidence type="ECO:0000269" key="3">
    <source>
    </source>
</evidence>
<evidence type="ECO:0000269" key="4">
    <source>
    </source>
</evidence>
<evidence type="ECO:0000303" key="5">
    <source>
    </source>
</evidence>
<evidence type="ECO:0000303" key="6">
    <source>
    </source>
</evidence>
<evidence type="ECO:0000305" key="7"/>
<protein>
    <recommendedName>
        <fullName evidence="7">Arginine N(omega)-methyltransferase</fullName>
        <ecNumber evidence="3 4">2.1.1.381</ecNumber>
    </recommendedName>
    <alternativeName>
        <fullName evidence="6">L-arginine guanidino N-methyltransferase</fullName>
    </alternativeName>
    <alternativeName>
        <fullName evidence="5">N-methyltransferase SznE</fullName>
    </alternativeName>
</protein>
<accession>A0A411EW25</accession>
<accession>A0A411MRB2</accession>
<dbReference type="EC" id="2.1.1.381" evidence="3 4"/>
<dbReference type="EMBL" id="MK291259">
    <property type="protein sequence ID" value="QBA82041.1"/>
    <property type="molecule type" value="Genomic_DNA"/>
</dbReference>
<dbReference type="EMBL" id="MK303572">
    <property type="protein sequence ID" value="QBA82201.1"/>
    <property type="molecule type" value="Genomic_DNA"/>
</dbReference>
<dbReference type="EMBL" id="MK440296">
    <property type="protein sequence ID" value="QBF29329.1"/>
    <property type="status" value="ALT_INIT"/>
    <property type="molecule type" value="Genomic_DNA"/>
</dbReference>
<dbReference type="SMR" id="A0A411EW25"/>
<dbReference type="KEGG" id="ag:QBA82201"/>
<dbReference type="BioCyc" id="MetaCyc:MONOMER-21764"/>
<dbReference type="GO" id="GO:0042054">
    <property type="term" value="F:histone methyltransferase activity"/>
    <property type="evidence" value="ECO:0007669"/>
    <property type="project" value="TreeGrafter"/>
</dbReference>
<dbReference type="GO" id="GO:0016274">
    <property type="term" value="F:protein-arginine N-methyltransferase activity"/>
    <property type="evidence" value="ECO:0007669"/>
    <property type="project" value="InterPro"/>
</dbReference>
<dbReference type="GO" id="GO:0017000">
    <property type="term" value="P:antibiotic biosynthetic process"/>
    <property type="evidence" value="ECO:0007669"/>
    <property type="project" value="UniProtKB-KW"/>
</dbReference>
<dbReference type="GO" id="GO:0032259">
    <property type="term" value="P:methylation"/>
    <property type="evidence" value="ECO:0007669"/>
    <property type="project" value="UniProtKB-KW"/>
</dbReference>
<dbReference type="CDD" id="cd02440">
    <property type="entry name" value="AdoMet_MTases"/>
    <property type="match status" value="1"/>
</dbReference>
<dbReference type="Gene3D" id="2.70.160.11">
    <property type="entry name" value="Hnrnp arginine n-methyltransferase1"/>
    <property type="match status" value="1"/>
</dbReference>
<dbReference type="Gene3D" id="3.40.50.150">
    <property type="entry name" value="Vaccinia Virus protein VP39"/>
    <property type="match status" value="1"/>
</dbReference>
<dbReference type="InterPro" id="IPR025799">
    <property type="entry name" value="Arg_MeTrfase"/>
</dbReference>
<dbReference type="InterPro" id="IPR055135">
    <property type="entry name" value="PRMT_dom"/>
</dbReference>
<dbReference type="InterPro" id="IPR029063">
    <property type="entry name" value="SAM-dependent_MTases_sf"/>
</dbReference>
<dbReference type="PANTHER" id="PTHR11006">
    <property type="entry name" value="PROTEIN ARGININE N-METHYLTRANSFERASE"/>
    <property type="match status" value="1"/>
</dbReference>
<dbReference type="PANTHER" id="PTHR11006:SF4">
    <property type="entry name" value="PROTEIN ARGININE N-METHYLTRANSFERASE 7"/>
    <property type="match status" value="1"/>
</dbReference>
<dbReference type="Pfam" id="PF06325">
    <property type="entry name" value="PrmA"/>
    <property type="match status" value="1"/>
</dbReference>
<dbReference type="Pfam" id="PF22528">
    <property type="entry name" value="PRMT_C"/>
    <property type="match status" value="1"/>
</dbReference>
<dbReference type="SUPFAM" id="SSF53335">
    <property type="entry name" value="S-adenosyl-L-methionine-dependent methyltransferases"/>
    <property type="match status" value="1"/>
</dbReference>
<dbReference type="PROSITE" id="PS51678">
    <property type="entry name" value="SAM_MT_PRMT"/>
    <property type="match status" value="1"/>
</dbReference>